<name>ARGB_PYRYE</name>
<sequence length="285" mass="30724">MLTNSERVKVLSEALPYIQQFSSRIIVIKYGGAAMKNQKLKDQVISDLVFLSFIGLRPILVHGGGPEINFWLDRLKILPKFDDGVRVTDQPTMDIVEMVLVGRVNKDLVATINKQGGKSVGLSGKDGLLITPRPNGKANLGFVGEVQNIDTKLLKILINNNYIPVIASVAADKEGQSYNINADTVAGEIAARLSNAEKLILLTDTPGILRNSSDPSTLISHLNIQEARDLTQTAVISGGMIPKVNCCIRSLAQGVASAHILDGRIDHALLLEILTDQGIGSMLVV</sequence>
<feature type="chain" id="PRO_0000277328" description="Acetylglutamate kinase">
    <location>
        <begin position="1"/>
        <end position="285"/>
    </location>
</feature>
<feature type="binding site" evidence="1">
    <location>
        <begin position="64"/>
        <end position="65"/>
    </location>
    <ligand>
        <name>substrate</name>
    </ligand>
</feature>
<feature type="binding site" evidence="1">
    <location>
        <position position="86"/>
    </location>
    <ligand>
        <name>substrate</name>
    </ligand>
</feature>
<feature type="binding site" evidence="1">
    <location>
        <position position="179"/>
    </location>
    <ligand>
        <name>substrate</name>
    </ligand>
</feature>
<feature type="site" description="Transition state stabilizer" evidence="1">
    <location>
        <position position="29"/>
    </location>
</feature>
<feature type="site" description="Transition state stabilizer" evidence="1">
    <location>
        <position position="243"/>
    </location>
</feature>
<organism>
    <name type="scientific">Pyropia yezoensis</name>
    <name type="common">Susabi-nori</name>
    <name type="synonym">Porphyra yezoensis</name>
    <dbReference type="NCBI Taxonomy" id="2788"/>
    <lineage>
        <taxon>Eukaryota</taxon>
        <taxon>Rhodophyta</taxon>
        <taxon>Bangiophyceae</taxon>
        <taxon>Bangiales</taxon>
        <taxon>Bangiaceae</taxon>
        <taxon>Pyropia</taxon>
    </lineage>
</organism>
<comment type="function">
    <text evidence="1">Catalyzes the ATP-dependent phosphorylation of N-acetyl-L-glutamate.</text>
</comment>
<comment type="catalytic activity">
    <reaction evidence="1">
        <text>N-acetyl-L-glutamate + ATP = N-acetyl-L-glutamyl 5-phosphate + ADP</text>
        <dbReference type="Rhea" id="RHEA:14629"/>
        <dbReference type="ChEBI" id="CHEBI:30616"/>
        <dbReference type="ChEBI" id="CHEBI:44337"/>
        <dbReference type="ChEBI" id="CHEBI:57936"/>
        <dbReference type="ChEBI" id="CHEBI:456216"/>
        <dbReference type="EC" id="2.7.2.8"/>
    </reaction>
</comment>
<comment type="pathway">
    <text evidence="1">Amino-acid biosynthesis; L-arginine biosynthesis; N(2)-acetyl-L-ornithine from L-glutamate: step 2/4.</text>
</comment>
<comment type="subcellular location">
    <subcellularLocation>
        <location evidence="1">Plastid</location>
        <location evidence="1">Chloroplast</location>
    </subcellularLocation>
</comment>
<comment type="similarity">
    <text evidence="1">Belongs to the acetylglutamate kinase family. ArgB subfamily.</text>
</comment>
<comment type="sequence caution" evidence="2">
    <conflict type="frameshift">
        <sequence resource="EMBL-CDS" id="BAE92453"/>
    </conflict>
</comment>
<gene>
    <name evidence="1" type="primary">argB</name>
</gene>
<geneLocation type="chloroplast"/>
<keyword id="KW-0028">Amino-acid biosynthesis</keyword>
<keyword id="KW-0055">Arginine biosynthesis</keyword>
<keyword id="KW-0067">ATP-binding</keyword>
<keyword id="KW-0150">Chloroplast</keyword>
<keyword id="KW-0418">Kinase</keyword>
<keyword id="KW-0547">Nucleotide-binding</keyword>
<keyword id="KW-0934">Plastid</keyword>
<keyword id="KW-0808">Transferase</keyword>
<reference key="1">
    <citation type="submission" date="2003-11" db="EMBL/GenBank/DDBJ databases">
        <title>Whole genome sequence of Porphyra yezoensis chloroplast.</title>
        <authorList>
            <person name="Kunimoto M."/>
            <person name="Morishima K."/>
            <person name="Yoshikawa M."/>
            <person name="Fukuda S."/>
            <person name="Kobayashi T."/>
            <person name="Kobayashi M."/>
            <person name="Okazaki T."/>
            <person name="Ohara I."/>
            <person name="Nakayama I."/>
        </authorList>
    </citation>
    <scope>NUCLEOTIDE SEQUENCE [LARGE SCALE GENOMIC DNA]</scope>
    <source>
        <strain>U-51</strain>
    </source>
</reference>
<protein>
    <recommendedName>
        <fullName evidence="1">Acetylglutamate kinase</fullName>
        <ecNumber evidence="1">2.7.2.8</ecNumber>
    </recommendedName>
    <alternativeName>
        <fullName evidence="1">N-acetyl-L-glutamate 5-phosphotransferase</fullName>
    </alternativeName>
    <alternativeName>
        <fullName evidence="1">NAG kinase</fullName>
        <shortName evidence="1">NAGK</shortName>
    </alternativeName>
</protein>
<accession>Q1XDF8</accession>
<proteinExistence type="inferred from homology"/>
<evidence type="ECO:0000255" key="1">
    <source>
        <dbReference type="HAMAP-Rule" id="MF_00082"/>
    </source>
</evidence>
<evidence type="ECO:0000305" key="2"/>
<dbReference type="EC" id="2.7.2.8" evidence="1"/>
<dbReference type="EMBL" id="AP006715">
    <property type="protein sequence ID" value="BAE92453.1"/>
    <property type="status" value="ALT_FRAME"/>
    <property type="molecule type" value="Genomic_DNA"/>
</dbReference>
<dbReference type="RefSeq" id="YP_537010.1">
    <property type="nucleotide sequence ID" value="NC_007932.1"/>
</dbReference>
<dbReference type="SMR" id="Q1XDF8"/>
<dbReference type="GeneID" id="3978832"/>
<dbReference type="UniPathway" id="UPA00068">
    <property type="reaction ID" value="UER00107"/>
</dbReference>
<dbReference type="GO" id="GO:0009507">
    <property type="term" value="C:chloroplast"/>
    <property type="evidence" value="ECO:0007669"/>
    <property type="project" value="UniProtKB-SubCell"/>
</dbReference>
<dbReference type="GO" id="GO:0003991">
    <property type="term" value="F:acetylglutamate kinase activity"/>
    <property type="evidence" value="ECO:0007669"/>
    <property type="project" value="UniProtKB-UniRule"/>
</dbReference>
<dbReference type="GO" id="GO:0005524">
    <property type="term" value="F:ATP binding"/>
    <property type="evidence" value="ECO:0007669"/>
    <property type="project" value="UniProtKB-UniRule"/>
</dbReference>
<dbReference type="GO" id="GO:0042450">
    <property type="term" value="P:arginine biosynthetic process via ornithine"/>
    <property type="evidence" value="ECO:0007669"/>
    <property type="project" value="UniProtKB-UniRule"/>
</dbReference>
<dbReference type="GO" id="GO:0006526">
    <property type="term" value="P:L-arginine biosynthetic process"/>
    <property type="evidence" value="ECO:0007669"/>
    <property type="project" value="UniProtKB-UniPathway"/>
</dbReference>
<dbReference type="CDD" id="cd04250">
    <property type="entry name" value="AAK_NAGK-C"/>
    <property type="match status" value="1"/>
</dbReference>
<dbReference type="FunFam" id="3.40.1160.10:FF:000004">
    <property type="entry name" value="Acetylglutamate kinase"/>
    <property type="match status" value="1"/>
</dbReference>
<dbReference type="Gene3D" id="3.40.1160.10">
    <property type="entry name" value="Acetylglutamate kinase-like"/>
    <property type="match status" value="1"/>
</dbReference>
<dbReference type="HAMAP" id="MF_00082">
    <property type="entry name" value="ArgB"/>
    <property type="match status" value="1"/>
</dbReference>
<dbReference type="InterPro" id="IPR036393">
    <property type="entry name" value="AceGlu_kinase-like_sf"/>
</dbReference>
<dbReference type="InterPro" id="IPR004662">
    <property type="entry name" value="AcgluKinase_fam"/>
</dbReference>
<dbReference type="InterPro" id="IPR037528">
    <property type="entry name" value="ArgB"/>
</dbReference>
<dbReference type="InterPro" id="IPR001048">
    <property type="entry name" value="Asp/Glu/Uridylate_kinase"/>
</dbReference>
<dbReference type="InterPro" id="IPR041727">
    <property type="entry name" value="NAGK-C"/>
</dbReference>
<dbReference type="NCBIfam" id="TIGR00761">
    <property type="entry name" value="argB"/>
    <property type="match status" value="1"/>
</dbReference>
<dbReference type="PANTHER" id="PTHR23342">
    <property type="entry name" value="N-ACETYLGLUTAMATE SYNTHASE"/>
    <property type="match status" value="1"/>
</dbReference>
<dbReference type="PANTHER" id="PTHR23342:SF0">
    <property type="entry name" value="N-ACETYLGLUTAMATE SYNTHASE, MITOCHONDRIAL"/>
    <property type="match status" value="1"/>
</dbReference>
<dbReference type="Pfam" id="PF00696">
    <property type="entry name" value="AA_kinase"/>
    <property type="match status" value="1"/>
</dbReference>
<dbReference type="PIRSF" id="PIRSF000728">
    <property type="entry name" value="NAGK"/>
    <property type="match status" value="1"/>
</dbReference>
<dbReference type="SUPFAM" id="SSF53633">
    <property type="entry name" value="Carbamate kinase-like"/>
    <property type="match status" value="1"/>
</dbReference>